<protein>
    <recommendedName>
        <fullName evidence="1">Large ribosomal subunit protein uL11</fullName>
    </recommendedName>
    <alternativeName>
        <fullName evidence="3">50S ribosomal protein L11</fullName>
    </alternativeName>
</protein>
<feature type="chain" id="PRO_0000104451" description="Large ribosomal subunit protein uL11">
    <location>
        <begin position="1"/>
        <end position="158"/>
    </location>
</feature>
<feature type="region of interest" description="Disordered" evidence="2">
    <location>
        <begin position="1"/>
        <end position="21"/>
    </location>
</feature>
<accession>Q97BN1</accession>
<organism>
    <name type="scientific">Thermoplasma volcanium (strain ATCC 51530 / DSM 4299 / JCM 9571 / NBRC 15438 / GSS1)</name>
    <dbReference type="NCBI Taxonomy" id="273116"/>
    <lineage>
        <taxon>Archaea</taxon>
        <taxon>Methanobacteriati</taxon>
        <taxon>Thermoplasmatota</taxon>
        <taxon>Thermoplasmata</taxon>
        <taxon>Thermoplasmatales</taxon>
        <taxon>Thermoplasmataceae</taxon>
        <taxon>Thermoplasma</taxon>
    </lineage>
</organism>
<evidence type="ECO:0000255" key="1">
    <source>
        <dbReference type="HAMAP-Rule" id="MF_00736"/>
    </source>
</evidence>
<evidence type="ECO:0000256" key="2">
    <source>
        <dbReference type="SAM" id="MobiDB-lite"/>
    </source>
</evidence>
<evidence type="ECO:0000305" key="3"/>
<comment type="function">
    <text evidence="1">Forms part of the ribosomal stalk which helps the ribosome interact with GTP-bound translation factors.</text>
</comment>
<comment type="subunit">
    <text evidence="1">Part of the ribosomal stalk of the 50S ribosomal subunit. Interacts with L10 and the large rRNA to form the base of the stalk. L10 forms an elongated spine to which L12 dimers bind in a sequential fashion forming a multimeric L10(L12)X complex.</text>
</comment>
<comment type="similarity">
    <text evidence="1">Belongs to the universal ribosomal protein uL11 family.</text>
</comment>
<gene>
    <name evidence="1" type="primary">rpl11</name>
    <name type="ordered locus">TV0424</name>
    <name type="ORF">TVG0409059</name>
</gene>
<name>RL11_THEVO</name>
<dbReference type="EMBL" id="BA000011">
    <property type="protein sequence ID" value="BAB59566.1"/>
    <property type="molecule type" value="Genomic_DNA"/>
</dbReference>
<dbReference type="RefSeq" id="WP_010916681.1">
    <property type="nucleotide sequence ID" value="NC_002689.2"/>
</dbReference>
<dbReference type="SMR" id="Q97BN1"/>
<dbReference type="STRING" id="273116.gene:9381202"/>
<dbReference type="PaxDb" id="273116-14324639"/>
<dbReference type="GeneID" id="1440939"/>
<dbReference type="KEGG" id="tvo:TVG0409059"/>
<dbReference type="eggNOG" id="arCOG04372">
    <property type="taxonomic scope" value="Archaea"/>
</dbReference>
<dbReference type="HOGENOM" id="CLU_074237_4_0_2"/>
<dbReference type="OrthoDB" id="8842at2157"/>
<dbReference type="PhylomeDB" id="Q97BN1"/>
<dbReference type="Proteomes" id="UP000001017">
    <property type="component" value="Chromosome"/>
</dbReference>
<dbReference type="GO" id="GO:0015934">
    <property type="term" value="C:large ribosomal subunit"/>
    <property type="evidence" value="ECO:0007669"/>
    <property type="project" value="TreeGrafter"/>
</dbReference>
<dbReference type="GO" id="GO:0070180">
    <property type="term" value="F:large ribosomal subunit rRNA binding"/>
    <property type="evidence" value="ECO:0007669"/>
    <property type="project" value="UniProtKB-UniRule"/>
</dbReference>
<dbReference type="GO" id="GO:0003735">
    <property type="term" value="F:structural constituent of ribosome"/>
    <property type="evidence" value="ECO:0007669"/>
    <property type="project" value="InterPro"/>
</dbReference>
<dbReference type="GO" id="GO:0006412">
    <property type="term" value="P:translation"/>
    <property type="evidence" value="ECO:0007669"/>
    <property type="project" value="UniProtKB-UniRule"/>
</dbReference>
<dbReference type="CDD" id="cd00349">
    <property type="entry name" value="Ribosomal_L11"/>
    <property type="match status" value="1"/>
</dbReference>
<dbReference type="FunFam" id="3.30.1550.10:FF:000007">
    <property type="entry name" value="50S ribosomal protein L11"/>
    <property type="match status" value="1"/>
</dbReference>
<dbReference type="Gene3D" id="1.10.10.250">
    <property type="entry name" value="Ribosomal protein L11, C-terminal domain"/>
    <property type="match status" value="1"/>
</dbReference>
<dbReference type="Gene3D" id="3.30.1550.10">
    <property type="entry name" value="Ribosomal protein L11/L12, N-terminal domain"/>
    <property type="match status" value="1"/>
</dbReference>
<dbReference type="HAMAP" id="MF_00736">
    <property type="entry name" value="Ribosomal_uL11"/>
    <property type="match status" value="1"/>
</dbReference>
<dbReference type="InterPro" id="IPR000911">
    <property type="entry name" value="Ribosomal_uL11"/>
</dbReference>
<dbReference type="InterPro" id="IPR020783">
    <property type="entry name" value="Ribosomal_uL11_C"/>
</dbReference>
<dbReference type="InterPro" id="IPR036769">
    <property type="entry name" value="Ribosomal_uL11_C_sf"/>
</dbReference>
<dbReference type="InterPro" id="IPR020784">
    <property type="entry name" value="Ribosomal_uL11_N"/>
</dbReference>
<dbReference type="InterPro" id="IPR036796">
    <property type="entry name" value="Ribosomal_uL11_N_sf"/>
</dbReference>
<dbReference type="NCBIfam" id="NF002232">
    <property type="entry name" value="PRK01143.1"/>
    <property type="match status" value="1"/>
</dbReference>
<dbReference type="PANTHER" id="PTHR11661">
    <property type="entry name" value="60S RIBOSOMAL PROTEIN L12"/>
    <property type="match status" value="1"/>
</dbReference>
<dbReference type="PANTHER" id="PTHR11661:SF1">
    <property type="entry name" value="LARGE RIBOSOMAL SUBUNIT PROTEIN UL11M"/>
    <property type="match status" value="1"/>
</dbReference>
<dbReference type="Pfam" id="PF00298">
    <property type="entry name" value="Ribosomal_L11"/>
    <property type="match status" value="1"/>
</dbReference>
<dbReference type="Pfam" id="PF03946">
    <property type="entry name" value="Ribosomal_L11_N"/>
    <property type="match status" value="1"/>
</dbReference>
<dbReference type="SMART" id="SM00649">
    <property type="entry name" value="RL11"/>
    <property type="match status" value="1"/>
</dbReference>
<dbReference type="SUPFAM" id="SSF54747">
    <property type="entry name" value="Ribosomal L11/L12e N-terminal domain"/>
    <property type="match status" value="1"/>
</dbReference>
<dbReference type="SUPFAM" id="SSF46906">
    <property type="entry name" value="Ribosomal protein L11, C-terminal domain"/>
    <property type="match status" value="1"/>
</dbReference>
<sequence length="158" mass="16688">MAQSVKTMVEGGKATTGPPIGPALGPLGLNVAQVVKEINEKTKEFQGMQVPVTVTVIDPETKKYEITVGVPPTSALLKKELGLEKGASKKKEAVAGNATLEQIKNVAIKKMPSMLAKDLKSAVLEVLGTCVAMGINVEGKDPKEVQKLIKSGQIKIEQ</sequence>
<keyword id="KW-0687">Ribonucleoprotein</keyword>
<keyword id="KW-0689">Ribosomal protein</keyword>
<keyword id="KW-0694">RNA-binding</keyword>
<keyword id="KW-0699">rRNA-binding</keyword>
<proteinExistence type="inferred from homology"/>
<reference key="1">
    <citation type="journal article" date="2000" name="Proc. Natl. Acad. Sci. U.S.A.">
        <title>Archaeal adaptation to higher temperatures revealed by genomic sequence of Thermoplasma volcanium.</title>
        <authorList>
            <person name="Kawashima T."/>
            <person name="Amano N."/>
            <person name="Koike H."/>
            <person name="Makino S."/>
            <person name="Higuchi S."/>
            <person name="Kawashima-Ohya Y."/>
            <person name="Watanabe K."/>
            <person name="Yamazaki M."/>
            <person name="Kanehori K."/>
            <person name="Kawamoto T."/>
            <person name="Nunoshiba T."/>
            <person name="Yamamoto Y."/>
            <person name="Aramaki H."/>
            <person name="Makino K."/>
            <person name="Suzuki M."/>
        </authorList>
    </citation>
    <scope>NUCLEOTIDE SEQUENCE [LARGE SCALE GENOMIC DNA]</scope>
    <source>
        <strain>ATCC 51530 / DSM 4299 / JCM 9571 / NBRC 15438 / GSS1</strain>
    </source>
</reference>